<protein>
    <recommendedName>
        <fullName>NAD(P)H-quinone oxidoreductase subunit 5, chloroplastic</fullName>
        <ecNumber>7.1.1.-</ecNumber>
    </recommendedName>
    <alternativeName>
        <fullName>NAD(P)H dehydrogenase subunit 5</fullName>
    </alternativeName>
    <alternativeName>
        <fullName>NADH-plastoquinone oxidoreductase subunit 5</fullName>
    </alternativeName>
</protein>
<name>NU5C_ORYSJ</name>
<accession>P0C328</accession>
<accession>P12129</accession>
<accession>Q6QXX7</accession>
<accession>Q6QY40</accession>
<evidence type="ECO:0000250" key="1"/>
<evidence type="ECO:0000255" key="2"/>
<evidence type="ECO:0000305" key="3"/>
<gene>
    <name type="primary">ndhF</name>
    <name type="ordered locus">LOC_Osp1g00880</name>
    <name type="ORF">Nip165</name>
</gene>
<sequence>MEHTYQYAWVIPLLPLPVIMSMGFGLFLVPTATKNLRRIWAFPSVLLLSIAMVFSVHLSIQQINGSSIYQYLWSWTVNNDFSLEFGYLIDPLTSIMLILITTVGILVLIYSDDYMSHDEGYLRFFVYISFFNTSMLGLVTSSNLIQIYFFWELVGMCSYLLIGFWFTRPIAASACQKAFVTNRVGDFGLLLGILGFFWITGSLEFRDLFKIANNWIPNNEINSLLTILCAFLLFLGAVAKSAQFPLHVWLPDAMEGPTPISALIHAATMVAAGIFLIARLLPLFISLPLIMSFISLIGTLTLFLGATLALAQRDIKRSLAYSTMSQLGYMMLALGIGSYQAALFHLITHAYSKALLFLGSGSVIHSMEPLVGYSPDKSQNMVLMGGLRKYIPITRTCFLWGTLSLCGIPPLACFWSKDEILSNSWLYSPFFGIIASFTAGLTAFYMFRIYLLTFDGYLRVHFQNYSSTKEDSLYSISLWGKRISKGVNRDFVLSTAKSGVSFFSQNLSKIHVNTGNRIGSFSTSLGTKNTFVYPHEPGNTMLFPLLILLLCTLFIGSIGIHFDNEIGELTILSKWLTPSINFFQESSNSSINSYEFITNAISSVSLAIFGLFIAYMFYGSAYSFFQNLDLINSFVKGGPKKYFFHQLKKKIYSWSYNRGYIDIFYTRTFTLGIRGLTELTQFFDKGVIDGITNGVGLASFCIGEEIKYVGGGRISSYLFFFLCYVSVFLFFFLS</sequence>
<organism>
    <name type="scientific">Oryza sativa subsp. japonica</name>
    <name type="common">Rice</name>
    <dbReference type="NCBI Taxonomy" id="39947"/>
    <lineage>
        <taxon>Eukaryota</taxon>
        <taxon>Viridiplantae</taxon>
        <taxon>Streptophyta</taxon>
        <taxon>Embryophyta</taxon>
        <taxon>Tracheophyta</taxon>
        <taxon>Spermatophyta</taxon>
        <taxon>Magnoliopsida</taxon>
        <taxon>Liliopsida</taxon>
        <taxon>Poales</taxon>
        <taxon>Poaceae</taxon>
        <taxon>BOP clade</taxon>
        <taxon>Oryzoideae</taxon>
        <taxon>Oryzeae</taxon>
        <taxon>Oryzinae</taxon>
        <taxon>Oryza</taxon>
        <taxon>Oryza sativa</taxon>
    </lineage>
</organism>
<dbReference type="EC" id="7.1.1.-"/>
<dbReference type="EMBL" id="X15901">
    <property type="protein sequence ID" value="CAA33950.1"/>
    <property type="molecule type" value="Genomic_DNA"/>
</dbReference>
<dbReference type="EMBL" id="AY522330">
    <property type="protein sequence ID" value="AAS46154.1"/>
    <property type="molecule type" value="Genomic_DNA"/>
</dbReference>
<dbReference type="PIR" id="JQ0286">
    <property type="entry name" value="DERZN5"/>
</dbReference>
<dbReference type="RefSeq" id="NP_039441.1">
    <property type="nucleotide sequence ID" value="NC_001320.1"/>
</dbReference>
<dbReference type="SMR" id="P0C328"/>
<dbReference type="FunCoup" id="P0C328">
    <property type="interactions" value="9"/>
</dbReference>
<dbReference type="STRING" id="39947.P0C328"/>
<dbReference type="PaxDb" id="39947-P0C328"/>
<dbReference type="GeneID" id="3131400"/>
<dbReference type="KEGG" id="dosa:ndhF"/>
<dbReference type="KEGG" id="osa:3131400"/>
<dbReference type="InParanoid" id="P0C328"/>
<dbReference type="OrthoDB" id="1890356at2759"/>
<dbReference type="Proteomes" id="UP000059680">
    <property type="component" value="Chloroplast"/>
</dbReference>
<dbReference type="GO" id="GO:0009535">
    <property type="term" value="C:chloroplast thylakoid membrane"/>
    <property type="evidence" value="ECO:0007669"/>
    <property type="project" value="UniProtKB-SubCell"/>
</dbReference>
<dbReference type="GO" id="GO:0009536">
    <property type="term" value="C:plastid"/>
    <property type="evidence" value="ECO:0000305"/>
    <property type="project" value="Gramene"/>
</dbReference>
<dbReference type="GO" id="GO:0008137">
    <property type="term" value="F:NADH dehydrogenase (ubiquinone) activity"/>
    <property type="evidence" value="ECO:0007669"/>
    <property type="project" value="InterPro"/>
</dbReference>
<dbReference type="GO" id="GO:0048038">
    <property type="term" value="F:quinone binding"/>
    <property type="evidence" value="ECO:0007669"/>
    <property type="project" value="UniProtKB-KW"/>
</dbReference>
<dbReference type="GO" id="GO:0042773">
    <property type="term" value="P:ATP synthesis coupled electron transport"/>
    <property type="evidence" value="ECO:0007669"/>
    <property type="project" value="InterPro"/>
</dbReference>
<dbReference type="GO" id="GO:0015990">
    <property type="term" value="P:electron transport coupled proton transport"/>
    <property type="evidence" value="ECO:0000318"/>
    <property type="project" value="GO_Central"/>
</dbReference>
<dbReference type="Gene3D" id="1.20.5.2700">
    <property type="match status" value="1"/>
</dbReference>
<dbReference type="InterPro" id="IPR002128">
    <property type="entry name" value="NADH_UbQ_OxRdtase_chlpt_su5_C"/>
</dbReference>
<dbReference type="InterPro" id="IPR018393">
    <property type="entry name" value="NADHpl_OxRdtase_5_subgr"/>
</dbReference>
<dbReference type="InterPro" id="IPR001750">
    <property type="entry name" value="ND/Mrp_TM"/>
</dbReference>
<dbReference type="InterPro" id="IPR003945">
    <property type="entry name" value="NU5C-like"/>
</dbReference>
<dbReference type="InterPro" id="IPR001516">
    <property type="entry name" value="Proton_antipo_N"/>
</dbReference>
<dbReference type="NCBIfam" id="TIGR01974">
    <property type="entry name" value="NDH_I_L"/>
    <property type="match status" value="1"/>
</dbReference>
<dbReference type="NCBIfam" id="NF005141">
    <property type="entry name" value="PRK06590.1"/>
    <property type="match status" value="1"/>
</dbReference>
<dbReference type="PANTHER" id="PTHR42829">
    <property type="entry name" value="NADH-UBIQUINONE OXIDOREDUCTASE CHAIN 5"/>
    <property type="match status" value="1"/>
</dbReference>
<dbReference type="PANTHER" id="PTHR42829:SF2">
    <property type="entry name" value="NADH-UBIQUINONE OXIDOREDUCTASE CHAIN 5"/>
    <property type="match status" value="1"/>
</dbReference>
<dbReference type="Pfam" id="PF01010">
    <property type="entry name" value="Proton_antipo_C"/>
    <property type="match status" value="1"/>
</dbReference>
<dbReference type="Pfam" id="PF00361">
    <property type="entry name" value="Proton_antipo_M"/>
    <property type="match status" value="1"/>
</dbReference>
<dbReference type="Pfam" id="PF00662">
    <property type="entry name" value="Proton_antipo_N"/>
    <property type="match status" value="1"/>
</dbReference>
<dbReference type="PRINTS" id="PR01434">
    <property type="entry name" value="NADHDHGNASE5"/>
</dbReference>
<dbReference type="PRINTS" id="PR01435">
    <property type="entry name" value="NPOXDRDTASE5"/>
</dbReference>
<geneLocation type="chloroplast"/>
<proteinExistence type="inferred from homology"/>
<feature type="chain" id="PRO_0000288697" description="NAD(P)H-quinone oxidoreductase subunit 5, chloroplastic">
    <location>
        <begin position="1"/>
        <end position="734"/>
    </location>
</feature>
<feature type="transmembrane region" description="Helical" evidence="2">
    <location>
        <begin position="9"/>
        <end position="29"/>
    </location>
</feature>
<feature type="transmembrane region" description="Helical" evidence="2">
    <location>
        <begin position="39"/>
        <end position="59"/>
    </location>
</feature>
<feature type="transmembrane region" description="Helical" evidence="2">
    <location>
        <begin position="89"/>
        <end position="109"/>
    </location>
</feature>
<feature type="transmembrane region" description="Helical" evidence="2">
    <location>
        <begin position="125"/>
        <end position="145"/>
    </location>
</feature>
<feature type="transmembrane region" description="Helical" evidence="2">
    <location>
        <begin position="147"/>
        <end position="167"/>
    </location>
</feature>
<feature type="transmembrane region" description="Helical" evidence="2">
    <location>
        <begin position="185"/>
        <end position="205"/>
    </location>
</feature>
<feature type="transmembrane region" description="Helical" evidence="2">
    <location>
        <begin position="224"/>
        <end position="244"/>
    </location>
</feature>
<feature type="transmembrane region" description="Helical" evidence="2">
    <location>
        <begin position="258"/>
        <end position="278"/>
    </location>
</feature>
<feature type="transmembrane region" description="Helical" evidence="2">
    <location>
        <begin position="280"/>
        <end position="300"/>
    </location>
</feature>
<feature type="transmembrane region" description="Helical" evidence="2">
    <location>
        <begin position="327"/>
        <end position="347"/>
    </location>
</feature>
<feature type="transmembrane region" description="Helical" evidence="2">
    <location>
        <begin position="354"/>
        <end position="374"/>
    </location>
</feature>
<feature type="transmembrane region" description="Helical" evidence="2">
    <location>
        <begin position="396"/>
        <end position="416"/>
    </location>
</feature>
<feature type="transmembrane region" description="Helical" evidence="2">
    <location>
        <begin position="425"/>
        <end position="445"/>
    </location>
</feature>
<feature type="transmembrane region" description="Helical" evidence="2">
    <location>
        <begin position="542"/>
        <end position="562"/>
    </location>
</feature>
<feature type="transmembrane region" description="Helical" evidence="2">
    <location>
        <begin position="605"/>
        <end position="625"/>
    </location>
</feature>
<feature type="transmembrane region" description="Helical" evidence="2">
    <location>
        <begin position="714"/>
        <end position="734"/>
    </location>
</feature>
<feature type="sequence conflict" description="In Ref. 1; CAA33950." evidence="3" ref="1">
    <original>A</original>
    <variation>T</variation>
    <location>
        <position position="267"/>
    </location>
</feature>
<feature type="sequence conflict" description="In Ref. 1; CAA33950." evidence="3" ref="1">
    <original>AYMFYGSAYSFFQNL</original>
    <variation>GIYVLWICLLFFSEF</variation>
    <location>
        <begin position="614"/>
        <end position="628"/>
    </location>
</feature>
<keyword id="KW-0150">Chloroplast</keyword>
<keyword id="KW-0472">Membrane</keyword>
<keyword id="KW-0520">NAD</keyword>
<keyword id="KW-0521">NADP</keyword>
<keyword id="KW-0934">Plastid</keyword>
<keyword id="KW-0618">Plastoquinone</keyword>
<keyword id="KW-0874">Quinone</keyword>
<keyword id="KW-1185">Reference proteome</keyword>
<keyword id="KW-0793">Thylakoid</keyword>
<keyword id="KW-1278">Translocase</keyword>
<keyword id="KW-0812">Transmembrane</keyword>
<keyword id="KW-1133">Transmembrane helix</keyword>
<keyword id="KW-0813">Transport</keyword>
<comment type="function">
    <text evidence="1">NDH shuttles electrons from NAD(P)H:plastoquinone, via FMN and iron-sulfur (Fe-S) centers, to quinones in the photosynthetic chain and possibly in a chloroplast respiratory chain. The immediate electron acceptor for the enzyme in this species is believed to be plastoquinone. Couples the redox reaction to proton translocation, and thus conserves the redox energy in a proton gradient (By similarity).</text>
</comment>
<comment type="catalytic activity">
    <reaction>
        <text>a plastoquinone + NADH + (n+1) H(+)(in) = a plastoquinol + NAD(+) + n H(+)(out)</text>
        <dbReference type="Rhea" id="RHEA:42608"/>
        <dbReference type="Rhea" id="RHEA-COMP:9561"/>
        <dbReference type="Rhea" id="RHEA-COMP:9562"/>
        <dbReference type="ChEBI" id="CHEBI:15378"/>
        <dbReference type="ChEBI" id="CHEBI:17757"/>
        <dbReference type="ChEBI" id="CHEBI:57540"/>
        <dbReference type="ChEBI" id="CHEBI:57945"/>
        <dbReference type="ChEBI" id="CHEBI:62192"/>
    </reaction>
</comment>
<comment type="catalytic activity">
    <reaction>
        <text>a plastoquinone + NADPH + (n+1) H(+)(in) = a plastoquinol + NADP(+) + n H(+)(out)</text>
        <dbReference type="Rhea" id="RHEA:42612"/>
        <dbReference type="Rhea" id="RHEA-COMP:9561"/>
        <dbReference type="Rhea" id="RHEA-COMP:9562"/>
        <dbReference type="ChEBI" id="CHEBI:15378"/>
        <dbReference type="ChEBI" id="CHEBI:17757"/>
        <dbReference type="ChEBI" id="CHEBI:57783"/>
        <dbReference type="ChEBI" id="CHEBI:58349"/>
        <dbReference type="ChEBI" id="CHEBI:62192"/>
    </reaction>
</comment>
<comment type="subunit">
    <text evidence="1">NDH is composed of at least 16 different subunits, 5 of which are encoded in the nucleus.</text>
</comment>
<comment type="subcellular location">
    <subcellularLocation>
        <location evidence="1">Plastid</location>
        <location evidence="1">Chloroplast thylakoid membrane</location>
        <topology evidence="1">Multi-pass membrane protein</topology>
    </subcellularLocation>
</comment>
<comment type="similarity">
    <text evidence="3">Belongs to the complex I subunit 5 family.</text>
</comment>
<reference key="1">
    <citation type="journal article" date="1989" name="Mol. Gen. Genet.">
        <title>The complete sequence of the rice (Oryza sativa) chloroplast genome: intermolecular recombination between distinct tRNA genes accounts for a major plastid DNA inversion during the evolution of the cereals.</title>
        <authorList>
            <person name="Hiratsuka J."/>
            <person name="Shimada H."/>
            <person name="Whittier R."/>
            <person name="Ishibashi T."/>
            <person name="Sakamoto M."/>
            <person name="Mori M."/>
            <person name="Kondo C."/>
            <person name="Honji Y."/>
            <person name="Sun C.-R."/>
            <person name="Meng B.-Y."/>
            <person name="Li Y.-Q."/>
            <person name="Kanno A."/>
            <person name="Nishizawa Y."/>
            <person name="Hirai A."/>
            <person name="Shinozaki K."/>
            <person name="Sugiura M."/>
        </authorList>
    </citation>
    <scope>NUCLEOTIDE SEQUENCE [LARGE SCALE GENOMIC DNA]</scope>
    <source>
        <strain>cv. Nipponbare</strain>
    </source>
</reference>
<reference key="2">
    <citation type="journal article" date="2004" name="Plant Physiol.">
        <title>A comparison of rice chloroplast genomes.</title>
        <authorList>
            <person name="Tang J."/>
            <person name="Xia H."/>
            <person name="Cao M."/>
            <person name="Zhang X."/>
            <person name="Zeng W."/>
            <person name="Hu S."/>
            <person name="Tong W."/>
            <person name="Wang J."/>
            <person name="Wang J."/>
            <person name="Yu J."/>
            <person name="Yang H."/>
            <person name="Zhu L."/>
        </authorList>
    </citation>
    <scope>NUCLEOTIDE SEQUENCE [LARGE SCALE GENOMIC DNA]</scope>
    <source>
        <strain>cv. Nipponbare</strain>
    </source>
</reference>